<accession>Q96R06</accession>
<accession>O95213</accession>
<accession>Q9BWE8</accession>
<accession>Q9NT17</accession>
<accession>Q9UFE6</accession>
<sequence>MWRVKKLSLSLSPSPQTGKPSMRTPLRELTLQPGALTNSGKRSPACSSLTPSLCKLGLQEGSNNSSPVDFVNNKRTDLSSEHFSHSSKWLETCQHESDEQPLDPIPQISSTPKTSEEAVDPLGNYMVKTIVLVPSPLGQQQDMIFEARLDTMAETNSISLNGPLRTDDLVREEVAPCMGDRFSEVAAVSEKPIFQESPSHLLEESPPNPCSEQLHCSKESLSSRTEAVREDLVPSESNAFLPSSVLWLSPSTALAADFRVNHVDPEEEIVEHGAMEEREMRFPTHPKESETEDQALVSSVEDILSTCLTPNLVEMESQEAPGPAVEDVGRILGSDTESWMSPLAWLEKGVNTSVMLENLRQSLSLPSMLRDAAIGTTPFSTCSVGTWFTPSAPQEKSTNTSQTGLVGTKHSTSETEQLLCGRPPDLTALSRHDLEDNLLSSLVILEVLSRQLRDWKSQLAVPHPETQDSSTQTDTSHSGITNKLQHLKESHEMGQALQQARNVMQSWVLISKELISLLHLSLLHLEEDKTTVSQESRRAETLVCCCFDLLKKLRAKLQSLKAEREEARHREEMALRGKDAAEIVLEAFCAHASQRISQLEQDLASMREFRGLLKDAQTQLVGLHAKQEELVQQTVSLTSTLQQDWRSMQLDYTTWTALLSRSRQLTEKLTVKSQQALQERDVAIEEKQEVSRVLEQVSAQLEECKGQTEQLELENSRLATDLRAQLQILANMDSQLKELQSQHTHCAQDLAMKDELLCQLTQSNEEQAAQWQKEEMALKHMQAELQQQQAVLAKEVRDLKETLEFADQENQVAHLELGQVECQLKTTLEVLRERSLQCENLKDTVENLTAKLASTIADNQEQDLEKTRQYSQKLGLLTEQLQSLTLFLQTKLKEKTEQETLLLSTACPPTQEHPLPNDRTFLGSILTAVADEEPESTPVPLLGSDKSAFTRVASMVSLQPAETPGMEESLAEMSIMTTELQSLCSLLQESKEEAIRTLQRKICELQARLQAQEEQHQEVQKAKEADIEKLNQALCLRYKNEKELQEVIQQQNEKILEQIDKSGELISLREEVTHLTRSLRRAETETKVLQEALAGQLDSNCQPMATNWIQEKVWLSQEVDKLRVMFLEMKNEKEKLMIKFQSHRNILEENLRRSDKELEKLDDIVQHIYKTLLSIPEVVRGCKELQGLLEFLS</sequence>
<dbReference type="EMBL" id="AF399910">
    <property type="protein sequence ID" value="AAK91712.1"/>
    <property type="molecule type" value="mRNA"/>
</dbReference>
<dbReference type="EMBL" id="AF345347">
    <property type="protein sequence ID" value="AAL06396.2"/>
    <property type="status" value="ALT_FRAME"/>
    <property type="molecule type" value="mRNA"/>
</dbReference>
<dbReference type="EMBL" id="AF063308">
    <property type="protein sequence ID" value="AAD02813.1"/>
    <property type="status" value="ALT_FRAME"/>
    <property type="molecule type" value="mRNA"/>
</dbReference>
<dbReference type="EMBL" id="BC000322">
    <property type="protein sequence ID" value="AAH00322.1"/>
    <property type="molecule type" value="mRNA"/>
</dbReference>
<dbReference type="EMBL" id="AL122116">
    <property type="protein sequence ID" value="CAB59275.1"/>
    <property type="molecule type" value="mRNA"/>
</dbReference>
<dbReference type="EMBL" id="AL137585">
    <property type="protein sequence ID" value="CAB70827.1"/>
    <property type="molecule type" value="mRNA"/>
</dbReference>
<dbReference type="CCDS" id="CCDS32594.1"/>
<dbReference type="PIR" id="JC7765">
    <property type="entry name" value="JC7765"/>
</dbReference>
<dbReference type="PIR" id="T34542">
    <property type="entry name" value="T34542"/>
</dbReference>
<dbReference type="PIR" id="T46296">
    <property type="entry name" value="T46296"/>
</dbReference>
<dbReference type="RefSeq" id="NP_006452.3">
    <property type="nucleotide sequence ID" value="NM_006461.3"/>
</dbReference>
<dbReference type="SMR" id="Q96R06"/>
<dbReference type="BioGRID" id="115861">
    <property type="interactions" value="199"/>
</dbReference>
<dbReference type="CORUM" id="Q96R06"/>
<dbReference type="DIP" id="DIP-30998N"/>
<dbReference type="FunCoup" id="Q96R06">
    <property type="interactions" value="1109"/>
</dbReference>
<dbReference type="IntAct" id="Q96R06">
    <property type="interactions" value="154"/>
</dbReference>
<dbReference type="MINT" id="Q96R06"/>
<dbReference type="STRING" id="9606.ENSP00000323300"/>
<dbReference type="GlyGen" id="Q96R06">
    <property type="glycosylation" value="1 site, 1 O-linked glycan (1 site)"/>
</dbReference>
<dbReference type="iPTMnet" id="Q96R06"/>
<dbReference type="PhosphoSitePlus" id="Q96R06"/>
<dbReference type="BioMuta" id="SPAG5"/>
<dbReference type="DMDM" id="47117278"/>
<dbReference type="jPOST" id="Q96R06"/>
<dbReference type="MassIVE" id="Q96R06"/>
<dbReference type="PaxDb" id="9606-ENSP00000323300"/>
<dbReference type="PeptideAtlas" id="Q96R06"/>
<dbReference type="ProteomicsDB" id="77922"/>
<dbReference type="Pumba" id="Q96R06"/>
<dbReference type="Antibodypedia" id="14156">
    <property type="antibodies" value="255 antibodies from 34 providers"/>
</dbReference>
<dbReference type="DNASU" id="10615"/>
<dbReference type="Ensembl" id="ENST00000321765.10">
    <property type="protein sequence ID" value="ENSP00000323300.5"/>
    <property type="gene ID" value="ENSG00000076382.17"/>
</dbReference>
<dbReference type="GeneID" id="10615"/>
<dbReference type="KEGG" id="hsa:10615"/>
<dbReference type="MANE-Select" id="ENST00000321765.10">
    <property type="protein sequence ID" value="ENSP00000323300.5"/>
    <property type="RefSeq nucleotide sequence ID" value="NM_006461.4"/>
    <property type="RefSeq protein sequence ID" value="NP_006452.3"/>
</dbReference>
<dbReference type="UCSC" id="uc002hbq.4">
    <property type="organism name" value="human"/>
</dbReference>
<dbReference type="AGR" id="HGNC:13452"/>
<dbReference type="CTD" id="10615"/>
<dbReference type="DisGeNET" id="10615"/>
<dbReference type="GeneCards" id="SPAG5"/>
<dbReference type="HGNC" id="HGNC:13452">
    <property type="gene designation" value="SPAG5"/>
</dbReference>
<dbReference type="HPA" id="ENSG00000076382">
    <property type="expression patterns" value="Tissue enhanced (bone marrow, kidney, testis)"/>
</dbReference>
<dbReference type="MIM" id="615562">
    <property type="type" value="gene"/>
</dbReference>
<dbReference type="neXtProt" id="NX_Q96R06"/>
<dbReference type="OpenTargets" id="ENSG00000076382"/>
<dbReference type="PharmGKB" id="PA134868542"/>
<dbReference type="VEuPathDB" id="HostDB:ENSG00000076382"/>
<dbReference type="eggNOG" id="ENOG502RW0Y">
    <property type="taxonomic scope" value="Eukaryota"/>
</dbReference>
<dbReference type="GeneTree" id="ENSGT00400000022377"/>
<dbReference type="HOGENOM" id="CLU_007803_0_0_1"/>
<dbReference type="InParanoid" id="Q96R06"/>
<dbReference type="OMA" id="MEEREMS"/>
<dbReference type="OrthoDB" id="5972338at2759"/>
<dbReference type="PAN-GO" id="Q96R06">
    <property type="GO annotations" value="0 GO annotations based on evolutionary models"/>
</dbReference>
<dbReference type="PhylomeDB" id="Q96R06"/>
<dbReference type="TreeFam" id="TF336280"/>
<dbReference type="PathwayCommons" id="Q96R06"/>
<dbReference type="SignaLink" id="Q96R06"/>
<dbReference type="SIGNOR" id="Q96R06"/>
<dbReference type="BioGRID-ORCS" id="10615">
    <property type="hits" value="138 hits in 1161 CRISPR screens"/>
</dbReference>
<dbReference type="CD-CODE" id="8C2F96ED">
    <property type="entry name" value="Centrosome"/>
</dbReference>
<dbReference type="ChiTaRS" id="SPAG5">
    <property type="organism name" value="human"/>
</dbReference>
<dbReference type="GeneWiki" id="Sperm_associated_antigen_5"/>
<dbReference type="GenomeRNAi" id="10615"/>
<dbReference type="Pharos" id="Q96R06">
    <property type="development level" value="Tbio"/>
</dbReference>
<dbReference type="PRO" id="PR:Q96R06"/>
<dbReference type="Proteomes" id="UP000005640">
    <property type="component" value="Chromosome 17"/>
</dbReference>
<dbReference type="RNAct" id="Q96R06">
    <property type="molecule type" value="protein"/>
</dbReference>
<dbReference type="Bgee" id="ENSG00000076382">
    <property type="expression patterns" value="Expressed in left testis and 130 other cell types or tissues"/>
</dbReference>
<dbReference type="ExpressionAtlas" id="Q96R06">
    <property type="expression patterns" value="baseline and differential"/>
</dbReference>
<dbReference type="GO" id="GO:0034451">
    <property type="term" value="C:centriolar satellite"/>
    <property type="evidence" value="ECO:0000315"/>
    <property type="project" value="UniProtKB"/>
</dbReference>
<dbReference type="GO" id="GO:0036064">
    <property type="term" value="C:ciliary basal body"/>
    <property type="evidence" value="ECO:0007669"/>
    <property type="project" value="Ensembl"/>
</dbReference>
<dbReference type="GO" id="GO:0035253">
    <property type="term" value="C:ciliary rootlet"/>
    <property type="evidence" value="ECO:0007669"/>
    <property type="project" value="Ensembl"/>
</dbReference>
<dbReference type="GO" id="GO:0005737">
    <property type="term" value="C:cytoplasm"/>
    <property type="evidence" value="ECO:0000314"/>
    <property type="project" value="UniProtKB"/>
</dbReference>
<dbReference type="GO" id="GO:0005829">
    <property type="term" value="C:cytosol"/>
    <property type="evidence" value="ECO:0000314"/>
    <property type="project" value="HPA"/>
</dbReference>
<dbReference type="GO" id="GO:0000776">
    <property type="term" value="C:kinetochore"/>
    <property type="evidence" value="ECO:0000314"/>
    <property type="project" value="UniProtKB"/>
</dbReference>
<dbReference type="GO" id="GO:0035371">
    <property type="term" value="C:microtubule plus-end"/>
    <property type="evidence" value="ECO:0000314"/>
    <property type="project" value="UniProtKB"/>
</dbReference>
<dbReference type="GO" id="GO:0030496">
    <property type="term" value="C:midbody"/>
    <property type="evidence" value="ECO:0007669"/>
    <property type="project" value="UniProtKB-SubCell"/>
</dbReference>
<dbReference type="GO" id="GO:0072686">
    <property type="term" value="C:mitotic spindle"/>
    <property type="evidence" value="ECO:0000314"/>
    <property type="project" value="UniProtKB"/>
</dbReference>
<dbReference type="GO" id="GO:0097431">
    <property type="term" value="C:mitotic spindle pole"/>
    <property type="evidence" value="ECO:0000314"/>
    <property type="project" value="UniProtKB"/>
</dbReference>
<dbReference type="GO" id="GO:0016604">
    <property type="term" value="C:nuclear body"/>
    <property type="evidence" value="ECO:0000314"/>
    <property type="project" value="HPA"/>
</dbReference>
<dbReference type="GO" id="GO:0008017">
    <property type="term" value="F:microtubule binding"/>
    <property type="evidence" value="ECO:0000314"/>
    <property type="project" value="UniProtKB"/>
</dbReference>
<dbReference type="GO" id="GO:0051301">
    <property type="term" value="P:cell division"/>
    <property type="evidence" value="ECO:0007669"/>
    <property type="project" value="UniProtKB-KW"/>
</dbReference>
<dbReference type="GO" id="GO:0007059">
    <property type="term" value="P:chromosome segregation"/>
    <property type="evidence" value="ECO:0000315"/>
    <property type="project" value="UniProtKB"/>
</dbReference>
<dbReference type="GO" id="GO:0051294">
    <property type="term" value="P:establishment of spindle orientation"/>
    <property type="evidence" value="ECO:0007669"/>
    <property type="project" value="Ensembl"/>
</dbReference>
<dbReference type="GO" id="GO:0000070">
    <property type="term" value="P:mitotic sister chromatid segregation"/>
    <property type="evidence" value="ECO:0000315"/>
    <property type="project" value="UniProtKB"/>
</dbReference>
<dbReference type="GO" id="GO:0032388">
    <property type="term" value="P:positive regulation of intracellular transport"/>
    <property type="evidence" value="ECO:0000315"/>
    <property type="project" value="UniProtKB"/>
</dbReference>
<dbReference type="GO" id="GO:1905832">
    <property type="term" value="P:positive regulation of spindle assembly"/>
    <property type="evidence" value="ECO:0000315"/>
    <property type="project" value="UniProtKB"/>
</dbReference>
<dbReference type="GO" id="GO:0071539">
    <property type="term" value="P:protein localization to centrosome"/>
    <property type="evidence" value="ECO:0000315"/>
    <property type="project" value="UniProtKB"/>
</dbReference>
<dbReference type="GO" id="GO:0051988">
    <property type="term" value="P:regulation of attachment of spindle microtubules to kinetochore"/>
    <property type="evidence" value="ECO:0000315"/>
    <property type="project" value="UniProtKB"/>
</dbReference>
<dbReference type="GO" id="GO:0090235">
    <property type="term" value="P:regulation of metaphase plate congression"/>
    <property type="evidence" value="ECO:0000315"/>
    <property type="project" value="UniProtKB"/>
</dbReference>
<dbReference type="GO" id="GO:0007051">
    <property type="term" value="P:spindle organization"/>
    <property type="evidence" value="ECO:0000315"/>
    <property type="project" value="UniProtKB"/>
</dbReference>
<dbReference type="InterPro" id="IPR028728">
    <property type="entry name" value="Astrin"/>
</dbReference>
<dbReference type="PANTHER" id="PTHR15347">
    <property type="entry name" value="SPERM-ASSOCIATED ANTIGEN 5"/>
    <property type="match status" value="1"/>
</dbReference>
<dbReference type="PANTHER" id="PTHR15347:SF1">
    <property type="entry name" value="SPERM-ASSOCIATED ANTIGEN 5"/>
    <property type="match status" value="1"/>
</dbReference>
<feature type="chain" id="PRO_0000072093" description="Sperm-associated antigen 5">
    <location>
        <begin position="1"/>
        <end position="1193"/>
    </location>
</feature>
<feature type="region of interest" description="Disordered" evidence="4">
    <location>
        <begin position="1"/>
        <end position="48"/>
    </location>
</feature>
<feature type="region of interest" description="Disordered" evidence="4">
    <location>
        <begin position="96"/>
        <end position="117"/>
    </location>
</feature>
<feature type="region of interest" description="Disordered" evidence="4">
    <location>
        <begin position="390"/>
        <end position="416"/>
    </location>
</feature>
<feature type="region of interest" description="Interaction with KNSTRN" evidence="12">
    <location>
        <begin position="482"/>
        <end position="850"/>
    </location>
</feature>
<feature type="coiled-coil region" evidence="3">
    <location>
        <begin position="545"/>
        <end position="608"/>
    </location>
</feature>
<feature type="coiled-coil region" evidence="3">
    <location>
        <begin position="759"/>
        <end position="868"/>
    </location>
</feature>
<feature type="coiled-coil region" evidence="3">
    <location>
        <begin position="979"/>
        <end position="1174"/>
    </location>
</feature>
<feature type="compositionally biased region" description="Polar residues" evidence="4">
    <location>
        <begin position="35"/>
        <end position="48"/>
    </location>
</feature>
<feature type="compositionally biased region" description="Polar residues" evidence="4">
    <location>
        <begin position="390"/>
        <end position="405"/>
    </location>
</feature>
<feature type="modified residue" description="Phosphoserine" evidence="2">
    <location>
        <position position="12"/>
    </location>
</feature>
<feature type="modified residue" description="Phosphoserine" evidence="2">
    <location>
        <position position="14"/>
    </location>
</feature>
<feature type="modified residue" description="Phosphoserine" evidence="20 23">
    <location>
        <position position="43"/>
    </location>
</feature>
<feature type="modified residue" description="Phosphoserine" evidence="21 22">
    <location>
        <position position="62"/>
    </location>
</feature>
<feature type="modified residue" description="Phosphoserine" evidence="22">
    <location>
        <position position="66"/>
    </location>
</feature>
<feature type="modified residue" description="Phosphothreonine; by GSK3-beta" evidence="9">
    <location>
        <position position="111"/>
    </location>
</feature>
<feature type="modified residue" description="Phosphoserine" evidence="20 21 22">
    <location>
        <position position="135"/>
    </location>
</feature>
<feature type="modified residue" description="Phosphoserine" evidence="23">
    <location>
        <position position="159"/>
    </location>
</feature>
<feature type="modified residue" description="Phosphoserine" evidence="22">
    <location>
        <position position="334"/>
    </location>
</feature>
<feature type="modified residue" description="Phosphothreonine" evidence="22">
    <location>
        <position position="336"/>
    </location>
</feature>
<feature type="modified residue" description="Phosphoserine" evidence="21 22">
    <location>
        <position position="341"/>
    </location>
</feature>
<feature type="modified residue" description="Phosphoserine" evidence="23">
    <location>
        <position position="353"/>
    </location>
</feature>
<feature type="modified residue" description="Phosphoserine" evidence="22">
    <location>
        <position position="362"/>
    </location>
</feature>
<feature type="modified residue" description="Phosphothreonine; by GSK3-beta" evidence="9">
    <location>
        <position position="937"/>
    </location>
</feature>
<feature type="modified residue" description="Phosphoserine; by GSK3-beta" evidence="9">
    <location>
        <position position="974"/>
    </location>
</feature>
<feature type="modified residue" description="Phosphothreonine; by GSK3-beta" evidence="9">
    <location>
        <position position="978"/>
    </location>
</feature>
<feature type="mutagenesis site" description="Decreased phosphorylation by GSK3-beta. Partial loss of spindle association; when associated with A-937, A974 and A-978." evidence="9">
    <original>T</original>
    <variation>A</variation>
    <location>
        <position position="111"/>
    </location>
</feature>
<feature type="mutagenesis site" description="Decreased phosphorylation by GSK3-beta. Partial loss of spindle association; when associated with A-111, A974 and A-978." evidence="9">
    <original>T</original>
    <variation>A</variation>
    <location>
        <position position="937"/>
    </location>
</feature>
<feature type="mutagenesis site" description="Decreased phosphorylation by GSK3-beta; when associated with A-978. Partial loss of spindle association; when associated with A-111, A937 and A-978." evidence="9">
    <original>S</original>
    <variation>A</variation>
    <location>
        <position position="974"/>
    </location>
</feature>
<feature type="mutagenesis site" description="Decreased phosphorylation by GSK3-beta; when associated with A-97A. Partial loss of spindle association; when associated with A-111, A-937 and A-974." evidence="9">
    <original>T</original>
    <variation>A</variation>
    <location>
        <position position="978"/>
    </location>
</feature>
<feature type="sequence conflict" description="In Ref. 1; AAK91712, 2; AAL06396 and 3; AAD02813." evidence="18" ref="1 2 3">
    <original>N</original>
    <variation>T</variation>
    <location>
        <position position="38"/>
    </location>
</feature>
<feature type="sequence conflict" description="In Ref. 1; AAK91712, 2; AAL06396 and 3; AAD02813." evidence="18" ref="1 2 3">
    <original>LEV</original>
    <variation>VEF</variation>
    <location>
        <begin position="445"/>
        <end position="447"/>
    </location>
</feature>
<feature type="sequence conflict" description="In Ref. 1; AAK91712, 2; AAL06396 and 3; AAD02813." evidence="18" ref="1 2 3">
    <original>S</original>
    <variation>N</variation>
    <location>
        <position position="533"/>
    </location>
</feature>
<feature type="sequence conflict" description="In Ref. 1; AAK91712, 2; AAL06396 and 3; AAD02813." evidence="18" ref="1 2 3">
    <original>S</original>
    <variation>I</variation>
    <location>
        <position position="716"/>
    </location>
</feature>
<feature type="sequence conflict" description="In Ref. 1; AAK91712, 2; AAL06396 and 3; AAD02813." evidence="18" ref="1 2 3">
    <original>WQ</original>
    <variation>CV</variation>
    <location>
        <begin position="771"/>
        <end position="772"/>
    </location>
</feature>
<feature type="sequence conflict" description="In Ref. 2; AAL06396 and 3; AAD02813." evidence="18" ref="2 3">
    <location>
        <position position="1051"/>
    </location>
</feature>
<reference key="1">
    <citation type="journal article" date="2001" name="Proc. Natl. Acad. Sci. U.S.A.">
        <title>Analysis of mitotic microtubule-associated proteins using mass spectrometry identifies astrin, a spindle-associated protein.</title>
        <authorList>
            <person name="Mack G.J."/>
            <person name="Compton D.A."/>
        </authorList>
    </citation>
    <scope>NUCLEOTIDE SEQUENCE [MRNA]</scope>
    <scope>FUNCTION</scope>
    <scope>INTERACTION WITH MICROTUBULES</scope>
    <scope>SUBCELLULAR LOCATION</scope>
    <scope>IDENTIFICATION BY MASS SPECTROMETRY</scope>
</reference>
<reference key="2">
    <citation type="journal article" date="2001" name="Biochem. Biophys. Res. Commun.">
        <title>Cloning and characterization of hMAP126, a new member of mitotic spindle-associated proteins.</title>
        <authorList>
            <person name="Chang M.-S."/>
            <person name="Huang C.-J."/>
            <person name="Chen M.-L."/>
            <person name="Chen S.-T."/>
            <person name="Fan C.-C."/>
            <person name="Chu J.-M."/>
            <person name="Lin W.-C."/>
            <person name="Yang Y.-C."/>
        </authorList>
    </citation>
    <scope>NUCLEOTIDE SEQUENCE [MRNA]</scope>
    <scope>SUBCELLULAR LOCATION</scope>
    <scope>TISSUE SPECIFICITY</scope>
    <source>
        <tissue>Testis</tissue>
    </source>
</reference>
<reference key="3">
    <citation type="submission" date="1998-05" db="EMBL/GenBank/DDBJ databases">
        <authorList>
            <person name="Schnabel J."/>
            <person name="Weber K."/>
            <person name="Hatzfeld M."/>
        </authorList>
    </citation>
    <scope>NUCLEOTIDE SEQUENCE [MRNA]</scope>
    <source>
        <tissue>Cervix carcinoma</tissue>
    </source>
</reference>
<reference key="4">
    <citation type="journal article" date="2004" name="Genome Res.">
        <title>The status, quality, and expansion of the NIH full-length cDNA project: the Mammalian Gene Collection (MGC).</title>
        <authorList>
            <consortium name="The MGC Project Team"/>
        </authorList>
    </citation>
    <scope>NUCLEOTIDE SEQUENCE [LARGE SCALE MRNA]</scope>
    <source>
        <tissue>Lung</tissue>
    </source>
</reference>
<reference key="5">
    <citation type="journal article" date="2007" name="BMC Genomics">
        <title>The full-ORF clone resource of the German cDNA consortium.</title>
        <authorList>
            <person name="Bechtel S."/>
            <person name="Rosenfelder H."/>
            <person name="Duda A."/>
            <person name="Schmidt C.P."/>
            <person name="Ernst U."/>
            <person name="Wellenreuther R."/>
            <person name="Mehrle A."/>
            <person name="Schuster C."/>
            <person name="Bahr A."/>
            <person name="Bloecker H."/>
            <person name="Heubner D."/>
            <person name="Hoerlein A."/>
            <person name="Michel G."/>
            <person name="Wedler H."/>
            <person name="Koehrer K."/>
            <person name="Ottenwaelder B."/>
            <person name="Poustka A."/>
            <person name="Wiemann S."/>
            <person name="Schupp I."/>
        </authorList>
    </citation>
    <scope>NUCLEOTIDE SEQUENCE [LARGE SCALE MRNA] OF 167-1193</scope>
    <source>
        <tissue>Testis</tissue>
    </source>
</reference>
<reference key="6">
    <citation type="journal article" date="2002" name="J. Cell Sci.">
        <title>The mitotic-spindle-associated protein astrin is essential for progression through mitosis.</title>
        <authorList>
            <person name="Gruber J."/>
            <person name="Harborth J."/>
            <person name="Schnabel J."/>
            <person name="Weber K."/>
            <person name="Hatzfeld M."/>
        </authorList>
    </citation>
    <scope>FUNCTION</scope>
    <scope>SUBCELLULAR LOCATION</scope>
    <scope>SUBUNIT STRUCTURE</scope>
</reference>
<reference key="7">
    <citation type="journal article" date="2006" name="Nat. Biotechnol.">
        <title>A probability-based approach for high-throughput protein phosphorylation analysis and site localization.</title>
        <authorList>
            <person name="Beausoleil S.A."/>
            <person name="Villen J."/>
            <person name="Gerber S.A."/>
            <person name="Rush J."/>
            <person name="Gygi S.P."/>
        </authorList>
    </citation>
    <scope>IDENTIFICATION BY MASS SPECTROMETRY [LARGE SCALE ANALYSIS]</scope>
    <source>
        <tissue>Cervix carcinoma</tissue>
    </source>
</reference>
<reference key="8">
    <citation type="journal article" date="2007" name="J. Cell Biol.">
        <title>Astrin is required for the maintenance of sister chromatid cohesion and centrosome integrity.</title>
        <authorList>
            <person name="Thein K.H."/>
            <person name="Kleylein-Sohn J."/>
            <person name="Nigg E.A."/>
            <person name="Gruneberg U."/>
        </authorList>
    </citation>
    <scope>FUNCTION</scope>
    <scope>SUBCELLULAR LOCATION</scope>
</reference>
<reference key="9">
    <citation type="journal article" date="2007" name="Science">
        <title>ATM and ATR substrate analysis reveals extensive protein networks responsive to DNA damage.</title>
        <authorList>
            <person name="Matsuoka S."/>
            <person name="Ballif B.A."/>
            <person name="Smogorzewska A."/>
            <person name="McDonald E.R. III"/>
            <person name="Hurov K.E."/>
            <person name="Luo J."/>
            <person name="Bakalarski C.E."/>
            <person name="Zhao Z."/>
            <person name="Solimini N."/>
            <person name="Lerenthal Y."/>
            <person name="Shiloh Y."/>
            <person name="Gygi S.P."/>
            <person name="Elledge S.J."/>
        </authorList>
    </citation>
    <scope>IDENTIFICATION BY MASS SPECTROMETRY [LARGE SCALE ANALYSIS]</scope>
    <source>
        <tissue>Embryonic kidney</tissue>
    </source>
</reference>
<reference key="10">
    <citation type="journal article" date="2008" name="Biochem. Biophys. Res. Commun.">
        <title>Astrin regulates Aurora-A localization.</title>
        <authorList>
            <person name="Du J."/>
            <person name="Jablonski S."/>
            <person name="Yen T.J."/>
            <person name="Hannon G.J."/>
        </authorList>
    </citation>
    <scope>FUNCTION</scope>
    <scope>INTERACTION WITH TUBULINS</scope>
    <scope>SUBCELLULAR LOCATION</scope>
    <scope>INDUCTION</scope>
    <scope>PHOSPHORYLATION BY AURKA</scope>
</reference>
<reference key="11">
    <citation type="journal article" date="2008" name="J. Biol. Chem.">
        <title>Glycogen synthase kinase 3beta interacts with and phosphorylates the spindle-associated protein astrin.</title>
        <authorList>
            <person name="Cheng T.S."/>
            <person name="Hsiao Y.L."/>
            <person name="Lin C.C."/>
            <person name="Yu C.T."/>
            <person name="Hsu C.M."/>
            <person name="Chang M.S."/>
            <person name="Lee C.I."/>
            <person name="Huang C.Y."/>
            <person name="Howng S.L."/>
            <person name="Hong Y.R."/>
        </authorList>
    </citation>
    <scope>FUNCTION</scope>
    <scope>PHOSPHORYLATION AT THR-111; THR-937; SER-974 AND THR-978</scope>
    <scope>SUBCELLULAR LOCATION</scope>
    <scope>MUTAGENESIS OF THR-111; THR-937; SER-974 AND THR-978</scope>
</reference>
<reference key="12">
    <citation type="journal article" date="2008" name="Mol. Cell">
        <title>Kinase-selective enrichment enables quantitative phosphoproteomics of the kinome across the cell cycle.</title>
        <authorList>
            <person name="Daub H."/>
            <person name="Olsen J.V."/>
            <person name="Bairlein M."/>
            <person name="Gnad F."/>
            <person name="Oppermann F.S."/>
            <person name="Korner R."/>
            <person name="Greff Z."/>
            <person name="Keri G."/>
            <person name="Stemmann O."/>
            <person name="Mann M."/>
        </authorList>
    </citation>
    <scope>PHOSPHORYLATION [LARGE SCALE ANALYSIS] AT SER-62; SER-135 AND SER-341</scope>
    <scope>IDENTIFICATION BY MASS SPECTROMETRY [LARGE SCALE ANALYSIS]</scope>
    <source>
        <tissue>Cervix carcinoma</tissue>
    </source>
</reference>
<reference key="13">
    <citation type="journal article" date="2008" name="Proc. Natl. Acad. Sci. U.S.A.">
        <title>A quantitative atlas of mitotic phosphorylation.</title>
        <authorList>
            <person name="Dephoure N."/>
            <person name="Zhou C."/>
            <person name="Villen J."/>
            <person name="Beausoleil S.A."/>
            <person name="Bakalarski C.E."/>
            <person name="Elledge S.J."/>
            <person name="Gygi S.P."/>
        </authorList>
    </citation>
    <scope>PHOSPHORYLATION [LARGE SCALE ANALYSIS] AT SER-43 AND SER-135</scope>
    <scope>IDENTIFICATION BY MASS SPECTROMETRY [LARGE SCALE ANALYSIS]</scope>
    <source>
        <tissue>Cervix carcinoma</tissue>
    </source>
</reference>
<reference key="14">
    <citation type="journal article" date="2009" name="Cell Cycle">
        <title>SNM1B/Apollo interacts with astrin and is required for the prophase cell cycle checkpoint.</title>
        <authorList>
            <person name="Liu L."/>
            <person name="Akhter S."/>
            <person name="Bae J.B."/>
            <person name="Mukhopadhyay S.S."/>
            <person name="Richie C.T."/>
            <person name="Liu X."/>
            <person name="Legerski R."/>
        </authorList>
    </citation>
    <scope>INTERACTION WITH DCLRE1B</scope>
</reference>
<reference key="15">
    <citation type="journal article" date="2009" name="Sci. Signal.">
        <title>Quantitative phosphoproteomic analysis of T cell receptor signaling reveals system-wide modulation of protein-protein interactions.</title>
        <authorList>
            <person name="Mayya V."/>
            <person name="Lundgren D.H."/>
            <person name="Hwang S.-I."/>
            <person name="Rezaul K."/>
            <person name="Wu L."/>
            <person name="Eng J.K."/>
            <person name="Rodionov V."/>
            <person name="Han D.K."/>
        </authorList>
    </citation>
    <scope>IDENTIFICATION BY MASS SPECTROMETRY [LARGE SCALE ANALYSIS]</scope>
    <source>
        <tissue>Leukemic T-cell</tissue>
    </source>
</reference>
<reference key="16">
    <citation type="journal article" date="2010" name="Sci. Signal.">
        <title>Quantitative phosphoproteomics reveals widespread full phosphorylation site occupancy during mitosis.</title>
        <authorList>
            <person name="Olsen J.V."/>
            <person name="Vermeulen M."/>
            <person name="Santamaria A."/>
            <person name="Kumar C."/>
            <person name="Miller M.L."/>
            <person name="Jensen L.J."/>
            <person name="Gnad F."/>
            <person name="Cox J."/>
            <person name="Jensen T.S."/>
            <person name="Nigg E.A."/>
            <person name="Brunak S."/>
            <person name="Mann M."/>
        </authorList>
    </citation>
    <scope>PHOSPHORYLATION [LARGE SCALE ANALYSIS] AT SER-62; SER-66; SER-135; SER-334; THR-336; SER-341 AND SER-362</scope>
    <scope>IDENTIFICATION BY MASS SPECTROMETRY [LARGE SCALE ANALYSIS]</scope>
    <source>
        <tissue>Cervix carcinoma</tissue>
    </source>
</reference>
<reference key="17">
    <citation type="journal article" date="2011" name="BMC Syst. Biol.">
        <title>Initial characterization of the human central proteome.</title>
        <authorList>
            <person name="Burkard T.R."/>
            <person name="Planyavsky M."/>
            <person name="Kaupe I."/>
            <person name="Breitwieser F.P."/>
            <person name="Buerckstuemmer T."/>
            <person name="Bennett K.L."/>
            <person name="Superti-Furga G."/>
            <person name="Colinge J."/>
        </authorList>
    </citation>
    <scope>IDENTIFICATION BY MASS SPECTROMETRY [LARGE SCALE ANALYSIS]</scope>
</reference>
<reference key="18">
    <citation type="journal article" date="2011" name="J. Cell Biol.">
        <title>The astrin-kinastrin/SKAP complex localizes to microtubule plus ends and facilitates chromosome alignment.</title>
        <authorList>
            <person name="Dunsch A.K."/>
            <person name="Linnane E."/>
            <person name="Barr F.A."/>
            <person name="Gruneberg U."/>
        </authorList>
    </citation>
    <scope>FUNCTION</scope>
    <scope>SUBCELLULAR LOCATION</scope>
    <scope>IDENTIFICATION IN A COMPLEX WITH KNSTRN; PLK1; DYNLL1 AND SGO2</scope>
    <scope>INTERACTION WITH KNSTRN</scope>
</reference>
<reference key="19">
    <citation type="journal article" date="2012" name="J. Cell Biol.">
        <title>Dynein light chain 1 and a spindle-associated adaptor promote dynein asymmetry and spindle orientation.</title>
        <authorList>
            <person name="Dunsch A.K."/>
            <person name="Hammond D."/>
            <person name="Lloyd J."/>
            <person name="Schermelleh L."/>
            <person name="Gruneberg U."/>
            <person name="Barr F.A."/>
        </authorList>
    </citation>
    <scope>INTERACTION WITH DYNLL1</scope>
</reference>
<reference key="20">
    <citation type="journal article" date="2013" name="Cell">
        <title>Inhibition of mTORC1 by astrin and stress granules prevents apoptosis in cancer cells.</title>
        <authorList>
            <person name="Thedieck K."/>
            <person name="Holzwarth B."/>
            <person name="Prentzell M.T."/>
            <person name="Boehlke C."/>
            <person name="Klasener K."/>
            <person name="Ruf S."/>
            <person name="Sonntag A.G."/>
            <person name="Maerz L."/>
            <person name="Grellscheid S.N."/>
            <person name="Kremmer E."/>
            <person name="Nitschke R."/>
            <person name="Kuehn E.W."/>
            <person name="Jonker J.W."/>
            <person name="Groen A.K."/>
            <person name="Reth M."/>
            <person name="Hall M.N."/>
            <person name="Baumeister R."/>
        </authorList>
    </citation>
    <scope>FUNCTION</scope>
    <scope>INTERACTION WITH G3BP1 AND RPTOR</scope>
    <scope>SUBCELLULAR LOCATION</scope>
</reference>
<reference key="21">
    <citation type="journal article" date="2013" name="J. Proteome Res.">
        <title>Toward a comprehensive characterization of a human cancer cell phosphoproteome.</title>
        <authorList>
            <person name="Zhou H."/>
            <person name="Di Palma S."/>
            <person name="Preisinger C."/>
            <person name="Peng M."/>
            <person name="Polat A.N."/>
            <person name="Heck A.J."/>
            <person name="Mohammed S."/>
        </authorList>
    </citation>
    <scope>PHOSPHORYLATION [LARGE SCALE ANALYSIS] AT SER-43; SER-159 AND SER-353</scope>
    <scope>IDENTIFICATION BY MASS SPECTROMETRY [LARGE SCALE ANALYSIS]</scope>
    <source>
        <tissue>Cervix carcinoma</tissue>
        <tissue>Erythroleukemia</tissue>
    </source>
</reference>
<reference key="22">
    <citation type="journal article" date="2014" name="Exp. Cell Res.">
        <title>OSBP-related protein 8 (ORP8) interacts with Homo sapiens sperm associated antigen 5 (SPAG5) and mediates oxysterol interference of HepG2 cell cycle.</title>
        <authorList>
            <person name="Zhong W."/>
            <person name="Zhou Y."/>
            <person name="Li J."/>
            <person name="Mysore R."/>
            <person name="Luo W."/>
            <person name="Li S."/>
            <person name="Chang M.S."/>
            <person name="Olkkonen V.M."/>
            <person name="Yan D."/>
        </authorList>
    </citation>
    <scope>INTERACTION WITH OSBPL8</scope>
</reference>
<reference key="23">
    <citation type="journal article" date="2015" name="Elife">
        <title>Centriolar satellites assemble centrosomal microcephaly proteins to recruit CDK2 and promote centriole duplication.</title>
        <authorList>
            <person name="Kodani A."/>
            <person name="Yu T.W."/>
            <person name="Johnson J.R."/>
            <person name="Jayaraman D."/>
            <person name="Johnson T.L."/>
            <person name="Al-Gazali L."/>
            <person name="Sztriha L."/>
            <person name="Partlow J.N."/>
            <person name="Kim H."/>
            <person name="Krup A.L."/>
            <person name="Dammermann A."/>
            <person name="Krogan N."/>
            <person name="Walsh C.A."/>
            <person name="Reiter J.F."/>
        </authorList>
    </citation>
    <scope>FUNCTION</scope>
    <scope>SUBCELLULAR LOCATION</scope>
    <scope>INTERACTION WITH CDK5RAP2 AND PCM1</scope>
</reference>
<reference key="24">
    <citation type="journal article" date="2016" name="J. Biol. Chem.">
        <title>Nuclear mitotic apparatus (NuMA) interacts with and regulates astrin at the mitotic spindle.</title>
        <authorList>
            <person name="Chu X."/>
            <person name="Chen X."/>
            <person name="Wan Q."/>
            <person name="Zheng Z."/>
            <person name="Du Q."/>
        </authorList>
    </citation>
    <scope>FUNCTION</scope>
    <scope>INTERACTION NUMA1</scope>
    <scope>SUBCELLULAR LOCATION</scope>
</reference>
<protein>
    <recommendedName>
        <fullName>Sperm-associated antigen 5</fullName>
    </recommendedName>
    <alternativeName>
        <fullName>Astrin</fullName>
    </alternativeName>
    <alternativeName>
        <fullName>Deepest</fullName>
    </alternativeName>
    <alternativeName>
        <fullName>Mitotic spindle-associated protein p126</fullName>
        <shortName>MAP126</shortName>
    </alternativeName>
</protein>
<comment type="function">
    <text evidence="7 8 9 10 12 14 16 17 19">Essential component of the mitotic spindle required for normal chromosome segregation and progression into anaphase (PubMed:11724960, PubMed:12356910, PubMed:27462074). Required for chromosome alignment, normal timing of sister chromatid segregation, and maintenance of spindle pole architecture (PubMed:17664331, PubMed:27462074). In complex with SKAP, promotes stable microtubule-kinetochore attachments. May contribute to the regulation of separase activity. May regulate AURKA localization to mitotic spindle, but not to centrosomes and CCNB1 localization to both mitotic spindle and centrosomes (PubMed:18361916, PubMed:21402792). Involved in centriole duplication. Required for CDK5RAP2, CEP152, WDR62 and CEP63 centrosomal localization and promotes the centrosomal localization of CDK2 (PubMed:26297806). In non-mitotic cells, upon stress induction, inhibits mammalian target of rapamycin complex 1 (mTORC1) association and recruits the mTORC1 component RPTOR to stress granules (SGs), thereby preventing mTORC1 hyperactivation-induced apoptosis (PubMed:23953116). May enhance GSK3B-mediated phosphorylation of other substrates, such as MAPT/TAU (PubMed:18055457).</text>
</comment>
<comment type="subunit">
    <text evidence="6 7 10 11 12 13 14 15 16 17">Homodimer, with a globular head domain and a long stalk. Homooligomer; the globular head domains associate, resulting in aster-like structures. Binds to microtubules in the mitotic spindle (PubMed:27462074). Interacts with DCLRE1B/Apollo. Part of an astrin (SPAG5)-kinastrin (SKAP) complex containing KNSTRN, SPAG5, PLK1, DYNLL1 and SGO2. Interacts with KNSTRN. Interacts with RPTOR; this interaction competes with RPTOR binding to MTOR, resulting in decreased mTORC1 formation. Interacts with G3BP1. The complex formed with G3BP1 AND RPTOR is increased by oxidative stress. Interacts with OSBPL8, PCM1 and CDK5RAP2 (PubMed:24424245, PubMed:26297806). Interacts (via C-terminus) with NUMA1 (via C-terminus); this interaction promotes the recruitment of SPAG5 to the microtubules at spindle poles in a dynein-dynactin-dependent manner (PubMed:27462074). Interacts with DYNLL1 (PubMed:22965910).</text>
</comment>
<comment type="interaction">
    <interactant intactId="EBI-413317">
        <id>Q96R06</id>
    </interactant>
    <interactant intactId="EBI-8643161">
        <id>Q9NX04</id>
        <label>AIRIM</label>
    </interactant>
    <organismsDiffer>false</organismsDiffer>
    <experiments>3</experiments>
</comment>
<comment type="interaction">
    <interactant intactId="EBI-413317">
        <id>Q96R06</id>
    </interactant>
    <interactant intactId="EBI-10187270">
        <id>Q9Y2J4-4</id>
        <label>AMOTL2</label>
    </interactant>
    <organismsDiffer>false</organismsDiffer>
    <experiments>3</experiments>
</comment>
<comment type="interaction">
    <interactant intactId="EBI-413317">
        <id>Q96R06</id>
    </interactant>
    <interactant intactId="EBI-448680">
        <id>O14965</id>
        <label>AURKA</label>
    </interactant>
    <organismsDiffer>false</organismsDiffer>
    <experiments>3</experiments>
</comment>
<comment type="interaction">
    <interactant intactId="EBI-413317">
        <id>Q96R06</id>
    </interactant>
    <interactant intactId="EBI-9977322">
        <id>A0AVN2</id>
        <label>BARD1</label>
    </interactant>
    <organismsDiffer>false</organismsDiffer>
    <experiments>3</experiments>
</comment>
<comment type="interaction">
    <interactant intactId="EBI-413317">
        <id>Q96R06</id>
    </interactant>
    <interactant intactId="EBI-10175300">
        <id>Q8TD31-3</id>
        <label>CCHCR1</label>
    </interactant>
    <organismsDiffer>false</organismsDiffer>
    <experiments>6</experiments>
</comment>
<comment type="interaction">
    <interactant intactId="EBI-413317">
        <id>Q96R06</id>
    </interactant>
    <interactant intactId="EBI-10260504">
        <id>Q86Y33</id>
        <label>CDC20B</label>
    </interactant>
    <organismsDiffer>false</organismsDiffer>
    <experiments>3</experiments>
</comment>
<comment type="interaction">
    <interactant intactId="EBI-413317">
        <id>Q96R06</id>
    </interactant>
    <interactant intactId="EBI-308374">
        <id>Q96SN8</id>
        <label>CDK5RAP2</label>
    </interactant>
    <organismsDiffer>false</organismsDiffer>
    <experiments>3</experiments>
</comment>
<comment type="interaction">
    <interactant intactId="EBI-413317">
        <id>Q96R06</id>
    </interactant>
    <interactant intactId="EBI-1003700">
        <id>Q9H3R5</id>
        <label>CENPH</label>
    </interactant>
    <organismsDiffer>false</organismsDiffer>
    <experiments>3</experiments>
</comment>
<comment type="interaction">
    <interactant intactId="EBI-413317">
        <id>Q96R06</id>
    </interactant>
    <interactant intactId="EBI-739498">
        <id>Q9P209</id>
        <label>CEP72</label>
    </interactant>
    <organismsDiffer>false</organismsDiffer>
    <experiments>2</experiments>
</comment>
<comment type="interaction">
    <interactant intactId="EBI-413317">
        <id>Q96R06</id>
    </interactant>
    <interactant intactId="EBI-743375">
        <id>Q9NX63</id>
        <label>CHCHD3</label>
    </interactant>
    <organismsDiffer>false</organismsDiffer>
    <experiments>3</experiments>
</comment>
<comment type="interaction">
    <interactant intactId="EBI-413317">
        <id>Q96R06</id>
    </interactant>
    <interactant intactId="EBI-913476">
        <id>Q7Z460</id>
        <label>CLASP1</label>
    </interactant>
    <organismsDiffer>false</organismsDiffer>
    <experiments>3</experiments>
</comment>
<comment type="interaction">
    <interactant intactId="EBI-413317">
        <id>Q96R06</id>
    </interactant>
    <interactant intactId="EBI-8646694">
        <id>O43602</id>
        <label>DCX</label>
    </interactant>
    <organismsDiffer>false</organismsDiffer>
    <experiments>3</experiments>
</comment>
<comment type="interaction">
    <interactant intactId="EBI-413317">
        <id>Q96R06</id>
    </interactant>
    <interactant intactId="EBI-529989">
        <id>Q9NRI5</id>
        <label>DISC1</label>
    </interactant>
    <organismsDiffer>false</organismsDiffer>
    <experiments>3</experiments>
</comment>
<comment type="interaction">
    <interactant intactId="EBI-413317">
        <id>Q96R06</id>
    </interactant>
    <interactant intactId="EBI-398610">
        <id>O60573</id>
        <label>EIF4E2</label>
    </interactant>
    <organismsDiffer>false</organismsDiffer>
    <experiments>3</experiments>
</comment>
<comment type="interaction">
    <interactant intactId="EBI-413317">
        <id>Q96R06</id>
    </interactant>
    <interactant intactId="EBI-740282">
        <id>Q9NVF7</id>
        <label>FBXO28</label>
    </interactant>
    <organismsDiffer>false</organismsDiffer>
    <experiments>3</experiments>
</comment>
<comment type="interaction">
    <interactant intactId="EBI-413317">
        <id>Q96R06</id>
    </interactant>
    <interactant intactId="EBI-744104">
        <id>P55040</id>
        <label>GEM</label>
    </interactant>
    <organismsDiffer>false</organismsDiffer>
    <experiments>3</experiments>
</comment>
<comment type="interaction">
    <interactant intactId="EBI-413317">
        <id>Q96R06</id>
    </interactant>
    <interactant intactId="EBI-10181276">
        <id>Q0D2H9</id>
        <label>GOLGA8DP</label>
    </interactant>
    <organismsDiffer>false</organismsDiffer>
    <experiments>3</experiments>
</comment>
<comment type="interaction">
    <interactant intactId="EBI-413317">
        <id>Q96R06</id>
    </interactant>
    <interactant intactId="EBI-10181260">
        <id>Q08AF8</id>
        <label>GOLGA8G</label>
    </interactant>
    <organismsDiffer>false</organismsDiffer>
    <experiments>3</experiments>
</comment>
<comment type="interaction">
    <interactant intactId="EBI-413317">
        <id>Q96R06</id>
    </interactant>
    <interactant intactId="EBI-2514791">
        <id>Q96CS2</id>
        <label>HAUS1</label>
    </interactant>
    <organismsDiffer>false</organismsDiffer>
    <experiments>3</experiments>
</comment>
<comment type="interaction">
    <interactant intactId="EBI-413317">
        <id>Q96R06</id>
    </interactant>
    <interactant intactId="EBI-11955401">
        <id>Q86VF2-5</id>
        <label>IGFN1</label>
    </interactant>
    <organismsDiffer>false</organismsDiffer>
    <experiments>3</experiments>
</comment>
<comment type="interaction">
    <interactant intactId="EBI-413317">
        <id>Q96R06</id>
    </interactant>
    <interactant intactId="EBI-740244">
        <id>Q7Z3B3</id>
        <label>KANSL1</label>
    </interactant>
    <organismsDiffer>false</organismsDiffer>
    <experiments>3</experiments>
</comment>
<comment type="interaction">
    <interactant intactId="EBI-413317">
        <id>Q96R06</id>
    </interactant>
    <interactant intactId="EBI-2430095">
        <id>P12035</id>
        <label>KRT3</label>
    </interactant>
    <organismsDiffer>false</organismsDiffer>
    <experiments>3</experiments>
</comment>
<comment type="interaction">
    <interactant intactId="EBI-413317">
        <id>Q96R06</id>
    </interactant>
    <interactant intactId="EBI-2949715">
        <id>O95678</id>
        <label>KRT75</label>
    </interactant>
    <organismsDiffer>false</organismsDiffer>
    <experiments>3</experiments>
</comment>
<comment type="interaction">
    <interactant intactId="EBI-413317">
        <id>Q96R06</id>
    </interactant>
    <interactant intactId="EBI-10274069">
        <id>Q8TCE9</id>
        <label>LGALS14</label>
    </interactant>
    <organismsDiffer>false</organismsDiffer>
    <experiments>6</experiments>
</comment>
<comment type="interaction">
    <interactant intactId="EBI-413317">
        <id>Q96R06</id>
    </interactant>
    <interactant intactId="EBI-719955">
        <id>Q96FE5</id>
        <label>LINGO1</label>
    </interactant>
    <organismsDiffer>false</organismsDiffer>
    <experiments>3</experiments>
</comment>
<comment type="interaction">
    <interactant intactId="EBI-413317">
        <id>Q96R06</id>
    </interactant>
    <interactant intactId="EBI-2880203">
        <id>O76041</id>
        <label>NEBL</label>
    </interactant>
    <organismsDiffer>false</organismsDiffer>
    <experiments>3</experiments>
</comment>
<comment type="interaction">
    <interactant intactId="EBI-413317">
        <id>Q96R06</id>
    </interactant>
    <interactant intactId="EBI-374840">
        <id>Q9Y5N6</id>
        <label>ORC6</label>
    </interactant>
    <organismsDiffer>false</organismsDiffer>
    <experiments>4</experiments>
</comment>
<comment type="interaction">
    <interactant intactId="EBI-413317">
        <id>Q96R06</id>
    </interactant>
    <interactant intactId="EBI-2684038">
        <id>Q9BZF1</id>
        <label>OSBPL8</label>
    </interactant>
    <organismsDiffer>false</organismsDiffer>
    <experiments>6</experiments>
</comment>
<comment type="interaction">
    <interactant intactId="EBI-413317">
        <id>Q96R06</id>
    </interactant>
    <interactant intactId="EBI-741421">
        <id>Q15154</id>
        <label>PCM1</label>
    </interactant>
    <organismsDiffer>false</organismsDiffer>
    <experiments>2</experiments>
</comment>
<comment type="interaction">
    <interactant intactId="EBI-413317">
        <id>Q96R06</id>
    </interactant>
    <interactant intactId="EBI-2568609">
        <id>Q9BSJ6</id>
        <label>PIMREG</label>
    </interactant>
    <organismsDiffer>false</organismsDiffer>
    <experiments>3</experiments>
</comment>
<comment type="interaction">
    <interactant intactId="EBI-413317">
        <id>Q96R06</id>
    </interactant>
    <interactant intactId="EBI-602382">
        <id>Q16512</id>
        <label>PKN1</label>
    </interactant>
    <organismsDiffer>false</organismsDiffer>
    <experiments>3</experiments>
</comment>
<comment type="interaction">
    <interactant intactId="EBI-413317">
        <id>Q96R06</id>
    </interactant>
    <interactant intactId="EBI-746202">
        <id>O00444</id>
        <label>PLK4</label>
    </interactant>
    <organismsDiffer>false</organismsDiffer>
    <experiments>3</experiments>
</comment>
<comment type="interaction">
    <interactant intactId="EBI-413317">
        <id>Q96R06</id>
    </interactant>
    <interactant intactId="EBI-359527">
        <id>P62875</id>
        <label>POLR2L</label>
    </interactant>
    <organismsDiffer>false</organismsDiffer>
    <experiments>3</experiments>
</comment>
<comment type="interaction">
    <interactant intactId="EBI-413317">
        <id>Q96R06</id>
    </interactant>
    <interactant intactId="EBI-11956563">
        <id>Q96HA1-2</id>
        <label>POM121</label>
    </interactant>
    <organismsDiffer>false</organismsDiffer>
    <experiments>3</experiments>
</comment>
<comment type="interaction">
    <interactant intactId="EBI-413317">
        <id>Q96R06</id>
    </interactant>
    <interactant intactId="EBI-740773">
        <id>Q96IZ5</id>
        <label>RBM41</label>
    </interactant>
    <organismsDiffer>false</organismsDiffer>
    <experiments>3</experiments>
</comment>
<comment type="interaction">
    <interactant intactId="EBI-413317">
        <id>Q96R06</id>
    </interactant>
    <interactant intactId="EBI-1567928">
        <id>Q8N122</id>
        <label>RPTOR</label>
    </interactant>
    <organismsDiffer>false</organismsDiffer>
    <experiments>9</experiments>
</comment>
<comment type="interaction">
    <interactant intactId="EBI-413317">
        <id>Q96R06</id>
    </interactant>
    <interactant intactId="EBI-747035">
        <id>Q9H788</id>
        <label>SH2D4A</label>
    </interactant>
    <organismsDiffer>false</organismsDiffer>
    <experiments>3</experiments>
</comment>
<comment type="interaction">
    <interactant intactId="EBI-413317">
        <id>Q96R06</id>
    </interactant>
    <interactant intactId="EBI-455078">
        <id>Q969G3</id>
        <label>SMARCE1</label>
    </interactant>
    <organismsDiffer>false</organismsDiffer>
    <experiments>3</experiments>
</comment>
<comment type="interaction">
    <interactant intactId="EBI-413317">
        <id>Q96R06</id>
    </interactant>
    <interactant intactId="EBI-10244848">
        <id>Q5SQN1</id>
        <label>SNAP47</label>
    </interactant>
    <organismsDiffer>false</organismsDiffer>
    <experiments>3</experiments>
</comment>
<comment type="interaction">
    <interactant intactId="EBI-413317">
        <id>Q96R06</id>
    </interactant>
    <interactant intactId="EBI-9053916">
        <id>Q63HK5</id>
        <label>TSHZ3</label>
    </interactant>
    <organismsDiffer>false</organismsDiffer>
    <experiments>3</experiments>
</comment>
<comment type="interaction">
    <interactant intactId="EBI-413317">
        <id>Q96R06</id>
    </interactant>
    <interactant intactId="EBI-6447954">
        <id>Q5W5X9</id>
        <label>TTC23</label>
    </interactant>
    <organismsDiffer>false</organismsDiffer>
    <experiments>3</experiments>
</comment>
<comment type="interaction">
    <interactant intactId="EBI-413317">
        <id>Q96R06</id>
    </interactant>
    <interactant intactId="EBI-740767">
        <id>Q53FD0</id>
        <label>ZC2HC1C</label>
    </interactant>
    <organismsDiffer>false</organismsDiffer>
    <experiments>3</experiments>
</comment>
<comment type="interaction">
    <interactant intactId="EBI-413317">
        <id>Q96R06</id>
    </interactant>
    <interactant intactId="EBI-6448783">
        <id>G3V1X1</id>
        <label>ZFC3H1</label>
    </interactant>
    <organismsDiffer>false</organismsDiffer>
    <experiments>3</experiments>
</comment>
<comment type="interaction">
    <interactant intactId="EBI-413317">
        <id>Q96R06</id>
    </interactant>
    <interactant intactId="EBI-2682299">
        <id>Q96NC0</id>
        <label>ZMAT2</label>
    </interactant>
    <organismsDiffer>false</organismsDiffer>
    <experiments>3</experiments>
</comment>
<comment type="interaction">
    <interactant intactId="EBI-413317">
        <id>Q96R06</id>
    </interactant>
    <interactant intactId="EBI-10172590">
        <id>Q7Z3I7</id>
        <label>ZNF572</label>
    </interactant>
    <organismsDiffer>false</organismsDiffer>
    <experiments>3</experiments>
</comment>
<comment type="interaction">
    <interactant intactId="EBI-413317">
        <id>Q96R06</id>
    </interactant>
    <interactant intactId="EBI-16429014">
        <id>A0A0S2Z5X4</id>
        <label>ZNF688</label>
    </interactant>
    <organismsDiffer>false</organismsDiffer>
    <experiments>3</experiments>
</comment>
<comment type="interaction">
    <interactant intactId="EBI-413317">
        <id>Q96R06</id>
    </interactant>
    <interactant intactId="EBI-25475920">
        <id>PRO_0000449631</id>
        <label>rep</label>
        <dbReference type="UniProtKB" id="P0DTD1"/>
    </interactant>
    <organismsDiffer>true</organismsDiffer>
    <experiments>3</experiments>
</comment>
<comment type="interaction">
    <interactant intactId="EBI-413317">
        <id>Q96R06</id>
    </interactant>
    <interactant intactId="EBI-25492395">
        <id>PRO_0000449633</id>
        <label>rep</label>
        <dbReference type="UniProtKB" id="P0DTD1"/>
    </interactant>
    <organismsDiffer>true</organismsDiffer>
    <experiments>3</experiments>
</comment>
<comment type="subcellular location">
    <subcellularLocation>
        <location evidence="17">Cytoplasm</location>
    </subcellularLocation>
    <subcellularLocation>
        <location evidence="17">Cytoplasm</location>
        <location evidence="17">Cytoskeleton</location>
    </subcellularLocation>
    <subcellularLocation>
        <location evidence="17">Cytoplasm</location>
        <location evidence="17">Cytoskeleton</location>
        <location evidence="17">Spindle</location>
    </subcellularLocation>
    <subcellularLocation>
        <location evidence="17">Cytoplasm</location>
        <location evidence="17">Cytoskeleton</location>
        <location evidence="17">Spindle pole</location>
    </subcellularLocation>
    <subcellularLocation>
        <location evidence="17">Chromosome</location>
        <location evidence="17">Centromere</location>
        <location evidence="17">Kinetochore</location>
    </subcellularLocation>
    <subcellularLocation>
        <location>Midbody</location>
    </subcellularLocation>
    <subcellularLocation>
        <location>Cytoplasm</location>
        <location>Cytoskeleton</location>
        <location>Microtubule organizing center</location>
        <location>Centrosome</location>
    </subcellularLocation>
    <subcellularLocation>
        <location>Cytoplasmic granule</location>
    </subcellularLocation>
    <subcellularLocation>
        <location evidence="16">Cytoplasm</location>
        <location evidence="16">Cytoskeleton</location>
        <location evidence="16">Microtubule organizing center</location>
        <location evidence="16">Centrosome</location>
        <location evidence="16">Centriolar satellite</location>
    </subcellularLocation>
    <text evidence="1 16 17">Colocalizes with PCM1 at centriolar satellites throughout the cell cycle (PubMed:26297806). In a punctate pattern in interphase cells. During mitosis, detected at spindle poles during prophase, throughout the spindle in metaphase and anaphase, and at midzone microtubules in anaphase and telophase (PubMed:27462074). Efficient targeting to the mitotic spindle may depend upon phosphorylation by GSK3B. Detected on kinetochores of chromosomes that have congressed. The astrin (SPAG5)-kinastrin (SKAP) complex localizes to the microtubule plus ends (By similarity). In non-mitotic non-stressed cells, shows a microtubuli pattern. In arsenite-stressed cells, accumulates in stress granules.</text>
</comment>
<comment type="tissue specificity">
    <text evidence="5">Highly expressed in testis. Detected at low levels in placenta, liver, pancreas, thymus and colon.</text>
</comment>
<comment type="induction">
    <text evidence="10">Expression is cell cycle-regulated, with an increase from prophase to cytokinesis and return to basal levels at the next G1 phase.</text>
</comment>
<comment type="PTM">
    <text evidence="9 10">Phosphorylated by AURKA.</text>
</comment>
<comment type="sequence caution" evidence="18">
    <conflict type="frameshift">
        <sequence resource="EMBL-CDS" id="AAD02813"/>
    </conflict>
</comment>
<comment type="sequence caution" evidence="18">
    <conflict type="frameshift">
        <sequence resource="EMBL-CDS" id="AAL06396"/>
    </conflict>
</comment>
<gene>
    <name type="primary">SPAG5</name>
</gene>
<name>SPAG5_HUMAN</name>
<organism>
    <name type="scientific">Homo sapiens</name>
    <name type="common">Human</name>
    <dbReference type="NCBI Taxonomy" id="9606"/>
    <lineage>
        <taxon>Eukaryota</taxon>
        <taxon>Metazoa</taxon>
        <taxon>Chordata</taxon>
        <taxon>Craniata</taxon>
        <taxon>Vertebrata</taxon>
        <taxon>Euteleostomi</taxon>
        <taxon>Mammalia</taxon>
        <taxon>Eutheria</taxon>
        <taxon>Euarchontoglires</taxon>
        <taxon>Primates</taxon>
        <taxon>Haplorrhini</taxon>
        <taxon>Catarrhini</taxon>
        <taxon>Hominidae</taxon>
        <taxon>Homo</taxon>
    </lineage>
</organism>
<proteinExistence type="evidence at protein level"/>
<evidence type="ECO:0000250" key="1"/>
<evidence type="ECO:0000250" key="2">
    <source>
        <dbReference type="UniProtKB" id="Q7TME2"/>
    </source>
</evidence>
<evidence type="ECO:0000255" key="3"/>
<evidence type="ECO:0000256" key="4">
    <source>
        <dbReference type="SAM" id="MobiDB-lite"/>
    </source>
</evidence>
<evidence type="ECO:0000269" key="5">
    <source>
    </source>
</evidence>
<evidence type="ECO:0000269" key="6">
    <source>
    </source>
</evidence>
<evidence type="ECO:0000269" key="7">
    <source>
    </source>
</evidence>
<evidence type="ECO:0000269" key="8">
    <source>
    </source>
</evidence>
<evidence type="ECO:0000269" key="9">
    <source>
    </source>
</evidence>
<evidence type="ECO:0000269" key="10">
    <source>
    </source>
</evidence>
<evidence type="ECO:0000269" key="11">
    <source>
    </source>
</evidence>
<evidence type="ECO:0000269" key="12">
    <source>
    </source>
</evidence>
<evidence type="ECO:0000269" key="13">
    <source>
    </source>
</evidence>
<evidence type="ECO:0000269" key="14">
    <source>
    </source>
</evidence>
<evidence type="ECO:0000269" key="15">
    <source>
    </source>
</evidence>
<evidence type="ECO:0000269" key="16">
    <source>
    </source>
</evidence>
<evidence type="ECO:0000269" key="17">
    <source>
    </source>
</evidence>
<evidence type="ECO:0000305" key="18"/>
<evidence type="ECO:0000305" key="19">
    <source>
    </source>
</evidence>
<evidence type="ECO:0007744" key="20">
    <source>
    </source>
</evidence>
<evidence type="ECO:0007744" key="21">
    <source>
    </source>
</evidence>
<evidence type="ECO:0007744" key="22">
    <source>
    </source>
</evidence>
<evidence type="ECO:0007744" key="23">
    <source>
    </source>
</evidence>
<keyword id="KW-0131">Cell cycle</keyword>
<keyword id="KW-0132">Cell division</keyword>
<keyword id="KW-0137">Centromere</keyword>
<keyword id="KW-0158">Chromosome</keyword>
<keyword id="KW-0175">Coiled coil</keyword>
<keyword id="KW-0963">Cytoplasm</keyword>
<keyword id="KW-0206">Cytoskeleton</keyword>
<keyword id="KW-0995">Kinetochore</keyword>
<keyword id="KW-0493">Microtubule</keyword>
<keyword id="KW-0498">Mitosis</keyword>
<keyword id="KW-0597">Phosphoprotein</keyword>
<keyword id="KW-1267">Proteomics identification</keyword>
<keyword id="KW-1185">Reference proteome</keyword>